<evidence type="ECO:0000255" key="1">
    <source>
        <dbReference type="HAMAP-Rule" id="MF_01306"/>
    </source>
</evidence>
<evidence type="ECO:0000305" key="2"/>
<proteinExistence type="inferred from homology"/>
<organism>
    <name type="scientific">Xanthomonas campestris pv. campestris (strain ATCC 33913 / DSM 3586 / NCPPB 528 / LMG 568 / P 25)</name>
    <dbReference type="NCBI Taxonomy" id="190485"/>
    <lineage>
        <taxon>Bacteria</taxon>
        <taxon>Pseudomonadati</taxon>
        <taxon>Pseudomonadota</taxon>
        <taxon>Gammaproteobacteria</taxon>
        <taxon>Lysobacterales</taxon>
        <taxon>Lysobacteraceae</taxon>
        <taxon>Xanthomonas</taxon>
    </lineage>
</organism>
<comment type="function">
    <text evidence="1">One of the primary rRNA binding proteins, it binds directly to 16S rRNA where it nucleates assembly of the body of the 30S subunit.</text>
</comment>
<comment type="function">
    <text evidence="1">With S5 and S12 plays an important role in translational accuracy.</text>
</comment>
<comment type="subunit">
    <text evidence="1">Part of the 30S ribosomal subunit. Contacts protein S5. The interaction surface between S4 and S5 is involved in control of translational fidelity.</text>
</comment>
<comment type="similarity">
    <text evidence="1">Belongs to the universal ribosomal protein uS4 family.</text>
</comment>
<accession>P0A0X9</accession>
<accession>Q9Z3E8</accession>
<feature type="chain" id="PRO_0000132497" description="Small ribosomal subunit protein uS4">
    <location>
        <begin position="1"/>
        <end position="208"/>
    </location>
</feature>
<feature type="domain" description="S4 RNA-binding" evidence="1">
    <location>
        <begin position="97"/>
        <end position="160"/>
    </location>
</feature>
<gene>
    <name evidence="1" type="primary">rpsD</name>
    <name type="ordered locus">XCC0918</name>
</gene>
<reference key="1">
    <citation type="journal article" date="2000" name="Biochim. Biophys. Acta">
        <title>Sequence and molecular analysis of the rpoA cluster genes from Xanthomonas campestris pv. campestris.</title>
        <authorList>
            <person name="Lai J.-Y."/>
            <person name="Huang C.-F."/>
            <person name="Tseng Y.-H."/>
            <person name="Yang M.-T."/>
        </authorList>
    </citation>
    <scope>NUCLEOTIDE SEQUENCE [GENOMIC DNA]</scope>
    <source>
        <strain>Xc11</strain>
    </source>
</reference>
<reference key="2">
    <citation type="journal article" date="2002" name="Nature">
        <title>Comparison of the genomes of two Xanthomonas pathogens with differing host specificities.</title>
        <authorList>
            <person name="da Silva A.C.R."/>
            <person name="Ferro J.A."/>
            <person name="Reinach F.C."/>
            <person name="Farah C.S."/>
            <person name="Furlan L.R."/>
            <person name="Quaggio R.B."/>
            <person name="Monteiro-Vitorello C.B."/>
            <person name="Van Sluys M.A."/>
            <person name="Almeida N.F. Jr."/>
            <person name="Alves L.M.C."/>
            <person name="do Amaral A.M."/>
            <person name="Bertolini M.C."/>
            <person name="Camargo L.E.A."/>
            <person name="Camarotte G."/>
            <person name="Cannavan F."/>
            <person name="Cardozo J."/>
            <person name="Chambergo F."/>
            <person name="Ciapina L.P."/>
            <person name="Cicarelli R.M.B."/>
            <person name="Coutinho L.L."/>
            <person name="Cursino-Santos J.R."/>
            <person name="El-Dorry H."/>
            <person name="Faria J.B."/>
            <person name="Ferreira A.J.S."/>
            <person name="Ferreira R.C.C."/>
            <person name="Ferro M.I.T."/>
            <person name="Formighieri E.F."/>
            <person name="Franco M.C."/>
            <person name="Greggio C.C."/>
            <person name="Gruber A."/>
            <person name="Katsuyama A.M."/>
            <person name="Kishi L.T."/>
            <person name="Leite R.P."/>
            <person name="Lemos E.G.M."/>
            <person name="Lemos M.V.F."/>
            <person name="Locali E.C."/>
            <person name="Machado M.A."/>
            <person name="Madeira A.M.B.N."/>
            <person name="Martinez-Rossi N.M."/>
            <person name="Martins E.C."/>
            <person name="Meidanis J."/>
            <person name="Menck C.F.M."/>
            <person name="Miyaki C.Y."/>
            <person name="Moon D.H."/>
            <person name="Moreira L.M."/>
            <person name="Novo M.T.M."/>
            <person name="Okura V.K."/>
            <person name="Oliveira M.C."/>
            <person name="Oliveira V.R."/>
            <person name="Pereira H.A."/>
            <person name="Rossi A."/>
            <person name="Sena J.A.D."/>
            <person name="Silva C."/>
            <person name="de Souza R.F."/>
            <person name="Spinola L.A.F."/>
            <person name="Takita M.A."/>
            <person name="Tamura R.E."/>
            <person name="Teixeira E.C."/>
            <person name="Tezza R.I.D."/>
            <person name="Trindade dos Santos M."/>
            <person name="Truffi D."/>
            <person name="Tsai S.M."/>
            <person name="White F.F."/>
            <person name="Setubal J.C."/>
            <person name="Kitajima J.P."/>
        </authorList>
    </citation>
    <scope>NUCLEOTIDE SEQUENCE [LARGE SCALE GENOMIC DNA]</scope>
    <source>
        <strain>ATCC 33913 / DSM 3586 / NCPPB 528 / LMG 568 / P 25</strain>
    </source>
</reference>
<protein>
    <recommendedName>
        <fullName evidence="1">Small ribosomal subunit protein uS4</fullName>
    </recommendedName>
    <alternativeName>
        <fullName evidence="2">30S ribosomal protein S4</fullName>
    </alternativeName>
</protein>
<name>RS4_XANCP</name>
<dbReference type="EMBL" id="U79735">
    <property type="protein sequence ID" value="AAD00324.1"/>
    <property type="molecule type" value="Genomic_DNA"/>
</dbReference>
<dbReference type="EMBL" id="AE008922">
    <property type="protein sequence ID" value="AAM40228.1"/>
    <property type="molecule type" value="Genomic_DNA"/>
</dbReference>
<dbReference type="RefSeq" id="NP_636304.1">
    <property type="nucleotide sequence ID" value="NC_003902.1"/>
</dbReference>
<dbReference type="RefSeq" id="WP_002811641.1">
    <property type="nucleotide sequence ID" value="NC_003902.1"/>
</dbReference>
<dbReference type="SMR" id="P0A0X9"/>
<dbReference type="STRING" id="190485.XCC0918"/>
<dbReference type="EnsemblBacteria" id="AAM40228">
    <property type="protein sequence ID" value="AAM40228"/>
    <property type="gene ID" value="XCC0918"/>
</dbReference>
<dbReference type="GeneID" id="97509359"/>
<dbReference type="KEGG" id="xcc:XCC0918"/>
<dbReference type="PATRIC" id="fig|190485.4.peg.990"/>
<dbReference type="eggNOG" id="COG0522">
    <property type="taxonomic scope" value="Bacteria"/>
</dbReference>
<dbReference type="HOGENOM" id="CLU_092403_0_2_6"/>
<dbReference type="OrthoDB" id="9803672at2"/>
<dbReference type="PRO" id="PR:P0A0X9"/>
<dbReference type="Proteomes" id="UP000001010">
    <property type="component" value="Chromosome"/>
</dbReference>
<dbReference type="GO" id="GO:0015935">
    <property type="term" value="C:small ribosomal subunit"/>
    <property type="evidence" value="ECO:0000318"/>
    <property type="project" value="GO_Central"/>
</dbReference>
<dbReference type="GO" id="GO:0019843">
    <property type="term" value="F:rRNA binding"/>
    <property type="evidence" value="ECO:0000318"/>
    <property type="project" value="GO_Central"/>
</dbReference>
<dbReference type="GO" id="GO:0003735">
    <property type="term" value="F:structural constituent of ribosome"/>
    <property type="evidence" value="ECO:0000318"/>
    <property type="project" value="GO_Central"/>
</dbReference>
<dbReference type="GO" id="GO:0042274">
    <property type="term" value="P:ribosomal small subunit biogenesis"/>
    <property type="evidence" value="ECO:0000318"/>
    <property type="project" value="GO_Central"/>
</dbReference>
<dbReference type="GO" id="GO:0006412">
    <property type="term" value="P:translation"/>
    <property type="evidence" value="ECO:0007669"/>
    <property type="project" value="UniProtKB-UniRule"/>
</dbReference>
<dbReference type="CDD" id="cd00165">
    <property type="entry name" value="S4"/>
    <property type="match status" value="1"/>
</dbReference>
<dbReference type="FunFam" id="1.10.1050.10:FF:000001">
    <property type="entry name" value="30S ribosomal protein S4"/>
    <property type="match status" value="1"/>
</dbReference>
<dbReference type="FunFam" id="3.10.290.10:FF:000001">
    <property type="entry name" value="30S ribosomal protein S4"/>
    <property type="match status" value="1"/>
</dbReference>
<dbReference type="Gene3D" id="1.10.1050.10">
    <property type="entry name" value="Ribosomal Protein S4 Delta 41, Chain A, domain 1"/>
    <property type="match status" value="1"/>
</dbReference>
<dbReference type="Gene3D" id="3.10.290.10">
    <property type="entry name" value="RNA-binding S4 domain"/>
    <property type="match status" value="1"/>
</dbReference>
<dbReference type="HAMAP" id="MF_01306_B">
    <property type="entry name" value="Ribosomal_uS4_B"/>
    <property type="match status" value="1"/>
</dbReference>
<dbReference type="InterPro" id="IPR022801">
    <property type="entry name" value="Ribosomal_uS4"/>
</dbReference>
<dbReference type="InterPro" id="IPR005709">
    <property type="entry name" value="Ribosomal_uS4_bac-type"/>
</dbReference>
<dbReference type="InterPro" id="IPR018079">
    <property type="entry name" value="Ribosomal_uS4_CS"/>
</dbReference>
<dbReference type="InterPro" id="IPR001912">
    <property type="entry name" value="Ribosomal_uS4_N"/>
</dbReference>
<dbReference type="InterPro" id="IPR002942">
    <property type="entry name" value="S4_RNA-bd"/>
</dbReference>
<dbReference type="InterPro" id="IPR036986">
    <property type="entry name" value="S4_RNA-bd_sf"/>
</dbReference>
<dbReference type="NCBIfam" id="NF003717">
    <property type="entry name" value="PRK05327.1"/>
    <property type="match status" value="1"/>
</dbReference>
<dbReference type="NCBIfam" id="TIGR01017">
    <property type="entry name" value="rpsD_bact"/>
    <property type="match status" value="1"/>
</dbReference>
<dbReference type="PANTHER" id="PTHR11831">
    <property type="entry name" value="30S 40S RIBOSOMAL PROTEIN"/>
    <property type="match status" value="1"/>
</dbReference>
<dbReference type="PANTHER" id="PTHR11831:SF4">
    <property type="entry name" value="SMALL RIBOSOMAL SUBUNIT PROTEIN US4M"/>
    <property type="match status" value="1"/>
</dbReference>
<dbReference type="Pfam" id="PF00163">
    <property type="entry name" value="Ribosomal_S4"/>
    <property type="match status" value="1"/>
</dbReference>
<dbReference type="Pfam" id="PF01479">
    <property type="entry name" value="S4"/>
    <property type="match status" value="1"/>
</dbReference>
<dbReference type="SMART" id="SM01390">
    <property type="entry name" value="Ribosomal_S4"/>
    <property type="match status" value="1"/>
</dbReference>
<dbReference type="SMART" id="SM00363">
    <property type="entry name" value="S4"/>
    <property type="match status" value="1"/>
</dbReference>
<dbReference type="SUPFAM" id="SSF55174">
    <property type="entry name" value="Alpha-L RNA-binding motif"/>
    <property type="match status" value="1"/>
</dbReference>
<dbReference type="PROSITE" id="PS00632">
    <property type="entry name" value="RIBOSOMAL_S4"/>
    <property type="match status" value="1"/>
</dbReference>
<dbReference type="PROSITE" id="PS50889">
    <property type="entry name" value="S4"/>
    <property type="match status" value="1"/>
</dbReference>
<sequence>MARYIGPTCKLARREGADLSLKSPARALDSKCKLEQKPGQHGAARKGKLSDYATQLREKQKVKRIYGLLERQFRNYYKKASTKKGNTGENLLQLLETRLDNVCYRMGFAVTRPAARQLVSHRGVLVNGKSVNLASYQIKAGDAITLSEKAQKQLRVQEALTVAEQHDMTPSWVEVDSKKFSGVFKAVPDRADLPSDINEALIVELYSK</sequence>
<keyword id="KW-1185">Reference proteome</keyword>
<keyword id="KW-0687">Ribonucleoprotein</keyword>
<keyword id="KW-0689">Ribosomal protein</keyword>
<keyword id="KW-0694">RNA-binding</keyword>
<keyword id="KW-0699">rRNA-binding</keyword>